<organism>
    <name type="scientific">Halothermothrix orenii (strain H 168 / OCM 544 / DSM 9562)</name>
    <dbReference type="NCBI Taxonomy" id="373903"/>
    <lineage>
        <taxon>Bacteria</taxon>
        <taxon>Bacillati</taxon>
        <taxon>Bacillota</taxon>
        <taxon>Clostridia</taxon>
        <taxon>Halanaerobiales</taxon>
        <taxon>Halothermotrichaceae</taxon>
        <taxon>Halothermothrix</taxon>
    </lineage>
</organism>
<sequence>MLTKEEKKAIIEEYQLEEGDTGSPEVQVALLTARIKNLTEHLKEHKHDYHSRRGLLKMVGKRKKLLRYLKRKDINRYRDLINRLGIRG</sequence>
<accession>B8CW77</accession>
<gene>
    <name evidence="1" type="primary">rpsO</name>
    <name type="ordered locus">Hore_07890</name>
</gene>
<feature type="chain" id="PRO_1000214761" description="Small ribosomal subunit protein uS15">
    <location>
        <begin position="1"/>
        <end position="88"/>
    </location>
</feature>
<protein>
    <recommendedName>
        <fullName evidence="1">Small ribosomal subunit protein uS15</fullName>
    </recommendedName>
    <alternativeName>
        <fullName evidence="2">30S ribosomal protein S15</fullName>
    </alternativeName>
</protein>
<comment type="function">
    <text evidence="1">One of the primary rRNA binding proteins, it binds directly to 16S rRNA where it helps nucleate assembly of the platform of the 30S subunit by binding and bridging several RNA helices of the 16S rRNA.</text>
</comment>
<comment type="function">
    <text evidence="1">Forms an intersubunit bridge (bridge B4) with the 23S rRNA of the 50S subunit in the ribosome.</text>
</comment>
<comment type="subunit">
    <text evidence="1">Part of the 30S ribosomal subunit. Forms a bridge to the 50S subunit in the 70S ribosome, contacting the 23S rRNA.</text>
</comment>
<comment type="similarity">
    <text evidence="1">Belongs to the universal ribosomal protein uS15 family.</text>
</comment>
<proteinExistence type="inferred from homology"/>
<keyword id="KW-1185">Reference proteome</keyword>
<keyword id="KW-0687">Ribonucleoprotein</keyword>
<keyword id="KW-0689">Ribosomal protein</keyword>
<keyword id="KW-0694">RNA-binding</keyword>
<keyword id="KW-0699">rRNA-binding</keyword>
<reference key="1">
    <citation type="journal article" date="2009" name="PLoS ONE">
        <title>Genome analysis of the anaerobic thermohalophilic bacterium Halothermothrix orenii.</title>
        <authorList>
            <person name="Mavromatis K."/>
            <person name="Ivanova N."/>
            <person name="Anderson I."/>
            <person name="Lykidis A."/>
            <person name="Hooper S.D."/>
            <person name="Sun H."/>
            <person name="Kunin V."/>
            <person name="Lapidus A."/>
            <person name="Hugenholtz P."/>
            <person name="Patel B."/>
            <person name="Kyrpides N.C."/>
        </authorList>
    </citation>
    <scope>NUCLEOTIDE SEQUENCE [LARGE SCALE GENOMIC DNA]</scope>
    <source>
        <strain>H 168 / OCM 544 / DSM 9562</strain>
    </source>
</reference>
<dbReference type="EMBL" id="CP001098">
    <property type="protein sequence ID" value="ACL69546.1"/>
    <property type="molecule type" value="Genomic_DNA"/>
</dbReference>
<dbReference type="RefSeq" id="WP_012635734.1">
    <property type="nucleotide sequence ID" value="NC_011899.1"/>
</dbReference>
<dbReference type="SMR" id="B8CW77"/>
<dbReference type="STRING" id="373903.Hore_07890"/>
<dbReference type="KEGG" id="hor:Hore_07890"/>
<dbReference type="eggNOG" id="COG0184">
    <property type="taxonomic scope" value="Bacteria"/>
</dbReference>
<dbReference type="HOGENOM" id="CLU_148518_0_0_9"/>
<dbReference type="OrthoDB" id="9799262at2"/>
<dbReference type="Proteomes" id="UP000000719">
    <property type="component" value="Chromosome"/>
</dbReference>
<dbReference type="GO" id="GO:0022627">
    <property type="term" value="C:cytosolic small ribosomal subunit"/>
    <property type="evidence" value="ECO:0007669"/>
    <property type="project" value="TreeGrafter"/>
</dbReference>
<dbReference type="GO" id="GO:0019843">
    <property type="term" value="F:rRNA binding"/>
    <property type="evidence" value="ECO:0007669"/>
    <property type="project" value="UniProtKB-UniRule"/>
</dbReference>
<dbReference type="GO" id="GO:0003735">
    <property type="term" value="F:structural constituent of ribosome"/>
    <property type="evidence" value="ECO:0007669"/>
    <property type="project" value="InterPro"/>
</dbReference>
<dbReference type="GO" id="GO:0006412">
    <property type="term" value="P:translation"/>
    <property type="evidence" value="ECO:0007669"/>
    <property type="project" value="UniProtKB-UniRule"/>
</dbReference>
<dbReference type="CDD" id="cd00353">
    <property type="entry name" value="Ribosomal_S15p_S13e"/>
    <property type="match status" value="1"/>
</dbReference>
<dbReference type="FunFam" id="1.10.287.10:FF:000002">
    <property type="entry name" value="30S ribosomal protein S15"/>
    <property type="match status" value="1"/>
</dbReference>
<dbReference type="Gene3D" id="6.10.250.3130">
    <property type="match status" value="1"/>
</dbReference>
<dbReference type="Gene3D" id="1.10.287.10">
    <property type="entry name" value="S15/NS1, RNA-binding"/>
    <property type="match status" value="1"/>
</dbReference>
<dbReference type="HAMAP" id="MF_01343_B">
    <property type="entry name" value="Ribosomal_uS15_B"/>
    <property type="match status" value="1"/>
</dbReference>
<dbReference type="InterPro" id="IPR000589">
    <property type="entry name" value="Ribosomal_uS15"/>
</dbReference>
<dbReference type="InterPro" id="IPR005290">
    <property type="entry name" value="Ribosomal_uS15_bac-type"/>
</dbReference>
<dbReference type="InterPro" id="IPR009068">
    <property type="entry name" value="uS15_NS1_RNA-bd_sf"/>
</dbReference>
<dbReference type="NCBIfam" id="TIGR00952">
    <property type="entry name" value="S15_bact"/>
    <property type="match status" value="1"/>
</dbReference>
<dbReference type="PANTHER" id="PTHR23321">
    <property type="entry name" value="RIBOSOMAL PROTEIN S15, BACTERIAL AND ORGANELLAR"/>
    <property type="match status" value="1"/>
</dbReference>
<dbReference type="PANTHER" id="PTHR23321:SF26">
    <property type="entry name" value="SMALL RIBOSOMAL SUBUNIT PROTEIN US15M"/>
    <property type="match status" value="1"/>
</dbReference>
<dbReference type="Pfam" id="PF00312">
    <property type="entry name" value="Ribosomal_S15"/>
    <property type="match status" value="1"/>
</dbReference>
<dbReference type="SMART" id="SM01387">
    <property type="entry name" value="Ribosomal_S15"/>
    <property type="match status" value="1"/>
</dbReference>
<dbReference type="SUPFAM" id="SSF47060">
    <property type="entry name" value="S15/NS1 RNA-binding domain"/>
    <property type="match status" value="1"/>
</dbReference>
<dbReference type="PROSITE" id="PS00362">
    <property type="entry name" value="RIBOSOMAL_S15"/>
    <property type="match status" value="1"/>
</dbReference>
<name>RS15_HALOH</name>
<evidence type="ECO:0000255" key="1">
    <source>
        <dbReference type="HAMAP-Rule" id="MF_01343"/>
    </source>
</evidence>
<evidence type="ECO:0000305" key="2"/>